<name>Y030_MYCTU</name>
<sequence>MVSGSDSRSEPSQLSDRDLVESVLRDLSEAADKWEALVTQAETVTYSVDLGDVRAVANSDGRLLELTLHPGVMTGYAHGELADRVNLAITALRDEVEAENRARYGGRLQ</sequence>
<gene>
    <name type="ordered locus">Rv0030</name>
    <name type="ORF">MTCY10H4.30</name>
</gene>
<keyword id="KW-1185">Reference proteome</keyword>
<dbReference type="EMBL" id="AL123456">
    <property type="protein sequence ID" value="CCP42752.1"/>
    <property type="molecule type" value="Genomic_DNA"/>
</dbReference>
<dbReference type="PIR" id="D70701">
    <property type="entry name" value="D70701"/>
</dbReference>
<dbReference type="RefSeq" id="NP_214544.1">
    <property type="nucleotide sequence ID" value="NC_000962.3"/>
</dbReference>
<dbReference type="RefSeq" id="WP_003400413.1">
    <property type="nucleotide sequence ID" value="NZ_NVQJ01000005.1"/>
</dbReference>
<dbReference type="SMR" id="P9WM95"/>
<dbReference type="STRING" id="83332.Rv0030"/>
<dbReference type="PaxDb" id="83332-Rv0030"/>
<dbReference type="DNASU" id="887051"/>
<dbReference type="GeneID" id="887051"/>
<dbReference type="KEGG" id="mtu:Rv0030"/>
<dbReference type="KEGG" id="mtv:RVBD_0030"/>
<dbReference type="TubercuList" id="Rv0030"/>
<dbReference type="eggNOG" id="ENOG5031M5V">
    <property type="taxonomic scope" value="Bacteria"/>
</dbReference>
<dbReference type="InParanoid" id="P9WM95"/>
<dbReference type="OrthoDB" id="4731987at2"/>
<dbReference type="Proteomes" id="UP000001584">
    <property type="component" value="Chromosome"/>
</dbReference>
<dbReference type="InterPro" id="IPR024296">
    <property type="entry name" value="DUF2710"/>
</dbReference>
<dbReference type="Pfam" id="PF10921">
    <property type="entry name" value="DUF2710"/>
    <property type="match status" value="1"/>
</dbReference>
<reference key="1">
    <citation type="journal article" date="1998" name="Nature">
        <title>Deciphering the biology of Mycobacterium tuberculosis from the complete genome sequence.</title>
        <authorList>
            <person name="Cole S.T."/>
            <person name="Brosch R."/>
            <person name="Parkhill J."/>
            <person name="Garnier T."/>
            <person name="Churcher C.M."/>
            <person name="Harris D.E."/>
            <person name="Gordon S.V."/>
            <person name="Eiglmeier K."/>
            <person name="Gas S."/>
            <person name="Barry C.E. III"/>
            <person name="Tekaia F."/>
            <person name="Badcock K."/>
            <person name="Basham D."/>
            <person name="Brown D."/>
            <person name="Chillingworth T."/>
            <person name="Connor R."/>
            <person name="Davies R.M."/>
            <person name="Devlin K."/>
            <person name="Feltwell T."/>
            <person name="Gentles S."/>
            <person name="Hamlin N."/>
            <person name="Holroyd S."/>
            <person name="Hornsby T."/>
            <person name="Jagels K."/>
            <person name="Krogh A."/>
            <person name="McLean J."/>
            <person name="Moule S."/>
            <person name="Murphy L.D."/>
            <person name="Oliver S."/>
            <person name="Osborne J."/>
            <person name="Quail M.A."/>
            <person name="Rajandream M.A."/>
            <person name="Rogers J."/>
            <person name="Rutter S."/>
            <person name="Seeger K."/>
            <person name="Skelton S."/>
            <person name="Squares S."/>
            <person name="Squares R."/>
            <person name="Sulston J.E."/>
            <person name="Taylor K."/>
            <person name="Whitehead S."/>
            <person name="Barrell B.G."/>
        </authorList>
    </citation>
    <scope>NUCLEOTIDE SEQUENCE [LARGE SCALE GENOMIC DNA]</scope>
    <source>
        <strain>ATCC 25618 / H37Rv</strain>
    </source>
</reference>
<reference key="2">
    <citation type="journal article" date="2011" name="Mol. Cell. Proteomics">
        <title>Proteogenomic analysis of Mycobacterium tuberculosis by high resolution mass spectrometry.</title>
        <authorList>
            <person name="Kelkar D.S."/>
            <person name="Kumar D."/>
            <person name="Kumar P."/>
            <person name="Balakrishnan L."/>
            <person name="Muthusamy B."/>
            <person name="Yadav A.K."/>
            <person name="Shrivastava P."/>
            <person name="Marimuthu A."/>
            <person name="Anand S."/>
            <person name="Sundaram H."/>
            <person name="Kingsbury R."/>
            <person name="Harsha H.C."/>
            <person name="Nair B."/>
            <person name="Prasad T.S."/>
            <person name="Chauhan D.S."/>
            <person name="Katoch K."/>
            <person name="Katoch V.M."/>
            <person name="Kumar P."/>
            <person name="Chaerkady R."/>
            <person name="Ramachandran S."/>
            <person name="Dash D."/>
            <person name="Pandey A."/>
        </authorList>
    </citation>
    <scope>IDENTIFICATION BY MASS SPECTROMETRY [LARGE SCALE ANALYSIS]</scope>
    <source>
        <strain>ATCC 25618 / H37Rv</strain>
    </source>
</reference>
<proteinExistence type="evidence at protein level"/>
<protein>
    <recommendedName>
        <fullName>Uncharacterized protein Rv0030</fullName>
    </recommendedName>
</protein>
<feature type="chain" id="PRO_0000103648" description="Uncharacterized protein Rv0030">
    <location>
        <begin position="1"/>
        <end position="109"/>
    </location>
</feature>
<organism>
    <name type="scientific">Mycobacterium tuberculosis (strain ATCC 25618 / H37Rv)</name>
    <dbReference type="NCBI Taxonomy" id="83332"/>
    <lineage>
        <taxon>Bacteria</taxon>
        <taxon>Bacillati</taxon>
        <taxon>Actinomycetota</taxon>
        <taxon>Actinomycetes</taxon>
        <taxon>Mycobacteriales</taxon>
        <taxon>Mycobacteriaceae</taxon>
        <taxon>Mycobacterium</taxon>
        <taxon>Mycobacterium tuberculosis complex</taxon>
    </lineage>
</organism>
<accession>P9WM95</accession>
<accession>L0T5B0</accession>
<accession>P64671</accession>
<accession>P71600</accession>